<dbReference type="EMBL" id="AL123456">
    <property type="protein sequence ID" value="CCP45156.1"/>
    <property type="molecule type" value="Genomic_DNA"/>
</dbReference>
<dbReference type="PIR" id="G70586">
    <property type="entry name" value="G70586"/>
</dbReference>
<dbReference type="RefSeq" id="WP_003412235.1">
    <property type="nucleotide sequence ID" value="NZ_NVQJ01000029.1"/>
</dbReference>
<dbReference type="SMR" id="P9WIA3"/>
<dbReference type="FunCoup" id="P9WIA3">
    <property type="interactions" value="26"/>
</dbReference>
<dbReference type="STRING" id="83332.Rv2368c"/>
<dbReference type="PaxDb" id="83332-Rv2368c"/>
<dbReference type="KEGG" id="mtu:Rv2368c"/>
<dbReference type="KEGG" id="mtv:RVBD_2368c"/>
<dbReference type="TubercuList" id="Rv2368c"/>
<dbReference type="eggNOG" id="COG1702">
    <property type="taxonomic scope" value="Bacteria"/>
</dbReference>
<dbReference type="InParanoid" id="P9WIA3"/>
<dbReference type="OrthoDB" id="9805148at2"/>
<dbReference type="PhylomeDB" id="P9WIA3"/>
<dbReference type="Proteomes" id="UP000001584">
    <property type="component" value="Chromosome"/>
</dbReference>
<dbReference type="GO" id="GO:0005829">
    <property type="term" value="C:cytosol"/>
    <property type="evidence" value="ECO:0000318"/>
    <property type="project" value="GO_Central"/>
</dbReference>
<dbReference type="GO" id="GO:0005886">
    <property type="term" value="C:plasma membrane"/>
    <property type="evidence" value="ECO:0007005"/>
    <property type="project" value="MTBBASE"/>
</dbReference>
<dbReference type="GO" id="GO:0005524">
    <property type="term" value="F:ATP binding"/>
    <property type="evidence" value="ECO:0000318"/>
    <property type="project" value="GO_Central"/>
</dbReference>
<dbReference type="GO" id="GO:0003723">
    <property type="term" value="F:RNA binding"/>
    <property type="evidence" value="ECO:0007669"/>
    <property type="project" value="InterPro"/>
</dbReference>
<dbReference type="FunFam" id="3.40.50.300:FF:000013">
    <property type="entry name" value="PhoH family ATPase"/>
    <property type="match status" value="1"/>
</dbReference>
<dbReference type="Gene3D" id="3.40.50.300">
    <property type="entry name" value="P-loop containing nucleotide triphosphate hydrolases"/>
    <property type="match status" value="1"/>
</dbReference>
<dbReference type="InterPro" id="IPR004087">
    <property type="entry name" value="KH_dom"/>
</dbReference>
<dbReference type="InterPro" id="IPR036612">
    <property type="entry name" value="KH_dom_type_1_sf"/>
</dbReference>
<dbReference type="InterPro" id="IPR027417">
    <property type="entry name" value="P-loop_NTPase"/>
</dbReference>
<dbReference type="InterPro" id="IPR003714">
    <property type="entry name" value="PhoH"/>
</dbReference>
<dbReference type="InterPro" id="IPR051451">
    <property type="entry name" value="PhoH2-like"/>
</dbReference>
<dbReference type="PANTHER" id="PTHR30473:SF1">
    <property type="entry name" value="PHOH-LIKE PROTEIN"/>
    <property type="match status" value="1"/>
</dbReference>
<dbReference type="PANTHER" id="PTHR30473">
    <property type="entry name" value="PROTEIN PHOH"/>
    <property type="match status" value="1"/>
</dbReference>
<dbReference type="Pfam" id="PF02562">
    <property type="entry name" value="PhoH"/>
    <property type="match status" value="1"/>
</dbReference>
<dbReference type="SMART" id="SM00322">
    <property type="entry name" value="KH"/>
    <property type="match status" value="1"/>
</dbReference>
<dbReference type="SUPFAM" id="SSF54791">
    <property type="entry name" value="Eukaryotic type KH-domain (KH-domain type I)"/>
    <property type="match status" value="1"/>
</dbReference>
<dbReference type="SUPFAM" id="SSF52540">
    <property type="entry name" value="P-loop containing nucleoside triphosphate hydrolases"/>
    <property type="match status" value="1"/>
</dbReference>
<reference key="1">
    <citation type="journal article" date="1998" name="Nature">
        <title>Deciphering the biology of Mycobacterium tuberculosis from the complete genome sequence.</title>
        <authorList>
            <person name="Cole S.T."/>
            <person name="Brosch R."/>
            <person name="Parkhill J."/>
            <person name="Garnier T."/>
            <person name="Churcher C.M."/>
            <person name="Harris D.E."/>
            <person name="Gordon S.V."/>
            <person name="Eiglmeier K."/>
            <person name="Gas S."/>
            <person name="Barry C.E. III"/>
            <person name="Tekaia F."/>
            <person name="Badcock K."/>
            <person name="Basham D."/>
            <person name="Brown D."/>
            <person name="Chillingworth T."/>
            <person name="Connor R."/>
            <person name="Davies R.M."/>
            <person name="Devlin K."/>
            <person name="Feltwell T."/>
            <person name="Gentles S."/>
            <person name="Hamlin N."/>
            <person name="Holroyd S."/>
            <person name="Hornsby T."/>
            <person name="Jagels K."/>
            <person name="Krogh A."/>
            <person name="McLean J."/>
            <person name="Moule S."/>
            <person name="Murphy L.D."/>
            <person name="Oliver S."/>
            <person name="Osborne J."/>
            <person name="Quail M.A."/>
            <person name="Rajandream M.A."/>
            <person name="Rogers J."/>
            <person name="Rutter S."/>
            <person name="Seeger K."/>
            <person name="Skelton S."/>
            <person name="Squares S."/>
            <person name="Squares R."/>
            <person name="Sulston J.E."/>
            <person name="Taylor K."/>
            <person name="Whitehead S."/>
            <person name="Barrell B.G."/>
        </authorList>
    </citation>
    <scope>NUCLEOTIDE SEQUENCE [LARGE SCALE GENOMIC DNA]</scope>
    <source>
        <strain>ATCC 25618 / H37Rv</strain>
    </source>
</reference>
<reference key="2">
    <citation type="journal article" date="2011" name="Mol. Cell. Proteomics">
        <title>Proteogenomic analysis of Mycobacterium tuberculosis by high resolution mass spectrometry.</title>
        <authorList>
            <person name="Kelkar D.S."/>
            <person name="Kumar D."/>
            <person name="Kumar P."/>
            <person name="Balakrishnan L."/>
            <person name="Muthusamy B."/>
            <person name="Yadav A.K."/>
            <person name="Shrivastava P."/>
            <person name="Marimuthu A."/>
            <person name="Anand S."/>
            <person name="Sundaram H."/>
            <person name="Kingsbury R."/>
            <person name="Harsha H.C."/>
            <person name="Nair B."/>
            <person name="Prasad T.S."/>
            <person name="Chauhan D.S."/>
            <person name="Katoch K."/>
            <person name="Katoch V.M."/>
            <person name="Kumar P."/>
            <person name="Chaerkady R."/>
            <person name="Ramachandran S."/>
            <person name="Dash D."/>
            <person name="Pandey A."/>
        </authorList>
    </citation>
    <scope>IDENTIFICATION BY MASS SPECTROMETRY [LARGE SCALE ANALYSIS]</scope>
    <source>
        <strain>ATCC 25618 / H37Rv</strain>
    </source>
</reference>
<protein>
    <recommendedName>
        <fullName>PhoH-like protein</fullName>
    </recommendedName>
</protein>
<organism>
    <name type="scientific">Mycobacterium tuberculosis (strain ATCC 25618 / H37Rv)</name>
    <dbReference type="NCBI Taxonomy" id="83332"/>
    <lineage>
        <taxon>Bacteria</taxon>
        <taxon>Bacillati</taxon>
        <taxon>Actinomycetota</taxon>
        <taxon>Actinomycetes</taxon>
        <taxon>Mycobacteriales</taxon>
        <taxon>Mycobacteriaceae</taxon>
        <taxon>Mycobacterium</taxon>
        <taxon>Mycobacterium tuberculosis complex</taxon>
    </lineage>
</organism>
<comment type="subcellular location">
    <subcellularLocation>
        <location evidence="3">Cytoplasm</location>
    </subcellularLocation>
</comment>
<comment type="similarity">
    <text evidence="3">Belongs to the PhoH family.</text>
</comment>
<sequence length="352" mass="37799">MTSRETRAADAAGARQADAQVRSSIDVPPDLVVGLLGSADENLRALERTLSADLHVRGNAVTLCGEPADVALAERVISELIAIVASGQSLTPEVVRHSVAMLVGTGNESPAEVLTLDILSRRGKTIRPKTLNQKRYVDAIDANTIVFGIGPAGTGKTYLAMAKAVHALQTKQVTRIILTRPAVEAGERLGFLPGTLSEKIDPYLRPLYDALYDMMDPELIPKLMSAGVIEVAPLAYMRGRTLNDAFIVLDEAQNTTAEQMKMFLTRLGFGSKVVVTGDVTQIDLPGGARSGLRAAVDILEDIDDIHIAELTSVDVVRHRLVSEIVDAYARYEEPGSGLNRAARRASGARGRR</sequence>
<evidence type="ECO:0000255" key="1"/>
<evidence type="ECO:0000256" key="2">
    <source>
        <dbReference type="SAM" id="MobiDB-lite"/>
    </source>
</evidence>
<evidence type="ECO:0000305" key="3"/>
<proteinExistence type="evidence at protein level"/>
<feature type="chain" id="PRO_0000201158" description="PhoH-like protein">
    <location>
        <begin position="1"/>
        <end position="352"/>
    </location>
</feature>
<feature type="region of interest" description="Disordered" evidence="2">
    <location>
        <begin position="1"/>
        <end position="21"/>
    </location>
</feature>
<feature type="compositionally biased region" description="Low complexity" evidence="2">
    <location>
        <begin position="9"/>
        <end position="20"/>
    </location>
</feature>
<feature type="binding site" evidence="1">
    <location>
        <begin position="150"/>
        <end position="157"/>
    </location>
    <ligand>
        <name>ATP</name>
        <dbReference type="ChEBI" id="CHEBI:30616"/>
    </ligand>
</feature>
<gene>
    <name type="ordered locus">Rv2368c</name>
    <name type="ORF">MTCY27.12</name>
</gene>
<name>PHOL_MYCTU</name>
<accession>P9WIA3</accession>
<accession>L0TCB4</accession>
<accession>O05830</accession>
<accession>P0A5S0</accession>
<keyword id="KW-0067">ATP-binding</keyword>
<keyword id="KW-0963">Cytoplasm</keyword>
<keyword id="KW-0547">Nucleotide-binding</keyword>
<keyword id="KW-1185">Reference proteome</keyword>